<organism>
    <name type="scientific">Arabidopsis thaliana</name>
    <name type="common">Mouse-ear cress</name>
    <dbReference type="NCBI Taxonomy" id="3702"/>
    <lineage>
        <taxon>Eukaryota</taxon>
        <taxon>Viridiplantae</taxon>
        <taxon>Streptophyta</taxon>
        <taxon>Embryophyta</taxon>
        <taxon>Tracheophyta</taxon>
        <taxon>Spermatophyta</taxon>
        <taxon>Magnoliopsida</taxon>
        <taxon>eudicotyledons</taxon>
        <taxon>Gunneridae</taxon>
        <taxon>Pentapetalae</taxon>
        <taxon>rosids</taxon>
        <taxon>malvids</taxon>
        <taxon>Brassicales</taxon>
        <taxon>Brassicaceae</taxon>
        <taxon>Camelineae</taxon>
        <taxon>Arabidopsis</taxon>
    </lineage>
</organism>
<protein>
    <recommendedName>
        <fullName evidence="7">Arabinosyltransferase RRA1</fullName>
        <ecNumber evidence="7">2.4.2.-</ecNumber>
    </recommendedName>
    <alternativeName>
        <fullName evidence="6">Protein REDUCED RESIDUAL ARABINOSE 1</fullName>
    </alternativeName>
</protein>
<proteinExistence type="evidence at transcript level"/>
<dbReference type="EC" id="2.4.2.-" evidence="7"/>
<dbReference type="EMBL" id="KJ138931">
    <property type="protein sequence ID" value="AHL38871.1"/>
    <property type="molecule type" value="mRNA"/>
</dbReference>
<dbReference type="EMBL" id="AC013258">
    <property type="protein sequence ID" value="AAG51930.1"/>
    <property type="molecule type" value="Genomic_DNA"/>
</dbReference>
<dbReference type="EMBL" id="CP002684">
    <property type="protein sequence ID" value="AEE35674.1"/>
    <property type="molecule type" value="Genomic_DNA"/>
</dbReference>
<dbReference type="EMBL" id="BT006179">
    <property type="protein sequence ID" value="AAP04162.1"/>
    <property type="molecule type" value="mRNA"/>
</dbReference>
<dbReference type="EMBL" id="AK228598">
    <property type="protein sequence ID" value="BAF00513.1"/>
    <property type="molecule type" value="mRNA"/>
</dbReference>
<dbReference type="EMBL" id="BT026432">
    <property type="protein sequence ID" value="ABH04539.1"/>
    <property type="molecule type" value="mRNA"/>
</dbReference>
<dbReference type="PIR" id="C96781">
    <property type="entry name" value="C96781"/>
</dbReference>
<dbReference type="RefSeq" id="NP_177648.1">
    <property type="nucleotide sequence ID" value="NM_106168.3"/>
</dbReference>
<dbReference type="FunCoup" id="Q9C9Q6">
    <property type="interactions" value="30"/>
</dbReference>
<dbReference type="STRING" id="3702.Q9C9Q6"/>
<dbReference type="CAZy" id="GT77">
    <property type="family name" value="Glycosyltransferase Family 77"/>
</dbReference>
<dbReference type="GlyCosmos" id="Q9C9Q6">
    <property type="glycosylation" value="1 site, No reported glycans"/>
</dbReference>
<dbReference type="GlyGen" id="Q9C9Q6">
    <property type="glycosylation" value="1 site"/>
</dbReference>
<dbReference type="PaxDb" id="3702-AT1G75120.1"/>
<dbReference type="ProteomicsDB" id="228209"/>
<dbReference type="EnsemblPlants" id="AT1G75120.1">
    <property type="protein sequence ID" value="AT1G75120.1"/>
    <property type="gene ID" value="AT1G75120"/>
</dbReference>
<dbReference type="GeneID" id="843849"/>
<dbReference type="Gramene" id="AT1G75120.1">
    <property type="protein sequence ID" value="AT1G75120.1"/>
    <property type="gene ID" value="AT1G75120"/>
</dbReference>
<dbReference type="KEGG" id="ath:AT1G75120"/>
<dbReference type="Araport" id="AT1G75120"/>
<dbReference type="TAIR" id="AT1G75120">
    <property type="gene designation" value="RRA1"/>
</dbReference>
<dbReference type="eggNOG" id="ENOG502QRD4">
    <property type="taxonomic scope" value="Eukaryota"/>
</dbReference>
<dbReference type="HOGENOM" id="CLU_037805_0_0_1"/>
<dbReference type="InParanoid" id="Q9C9Q6"/>
<dbReference type="OMA" id="NRTAYGY"/>
<dbReference type="OrthoDB" id="1032665at2759"/>
<dbReference type="PhylomeDB" id="Q9C9Q6"/>
<dbReference type="PRO" id="PR:Q9C9Q6"/>
<dbReference type="Proteomes" id="UP000006548">
    <property type="component" value="Chromosome 1"/>
</dbReference>
<dbReference type="ExpressionAtlas" id="Q9C9Q6">
    <property type="expression patterns" value="baseline and differential"/>
</dbReference>
<dbReference type="GO" id="GO:0000139">
    <property type="term" value="C:Golgi membrane"/>
    <property type="evidence" value="ECO:0007669"/>
    <property type="project" value="UniProtKB-SubCell"/>
</dbReference>
<dbReference type="GO" id="GO:0016757">
    <property type="term" value="F:glycosyltransferase activity"/>
    <property type="evidence" value="ECO:0007669"/>
    <property type="project" value="UniProtKB-KW"/>
</dbReference>
<dbReference type="GO" id="GO:0071555">
    <property type="term" value="P:cell wall organization"/>
    <property type="evidence" value="ECO:0007669"/>
    <property type="project" value="UniProtKB-KW"/>
</dbReference>
<dbReference type="GO" id="GO:0080147">
    <property type="term" value="P:root hair cell development"/>
    <property type="evidence" value="ECO:0000315"/>
    <property type="project" value="TAIR"/>
</dbReference>
<dbReference type="Gene3D" id="3.90.550.10">
    <property type="entry name" value="Spore Coat Polysaccharide Biosynthesis Protein SpsA, Chain A"/>
    <property type="match status" value="1"/>
</dbReference>
<dbReference type="InterPro" id="IPR005069">
    <property type="entry name" value="Nucl-diP-sugar_transferase"/>
</dbReference>
<dbReference type="InterPro" id="IPR029044">
    <property type="entry name" value="Nucleotide-diphossugar_trans"/>
</dbReference>
<dbReference type="InterPro" id="IPR044290">
    <property type="entry name" value="RRA1/2/3"/>
</dbReference>
<dbReference type="PANTHER" id="PTHR46581:SF9">
    <property type="entry name" value="ARABINOSYLTRANSFERASE RRA1-RELATED"/>
    <property type="match status" value="1"/>
</dbReference>
<dbReference type="PANTHER" id="PTHR46581">
    <property type="entry name" value="ARABINOSYLTRANSFERASE RRA3"/>
    <property type="match status" value="1"/>
</dbReference>
<dbReference type="Pfam" id="PF03407">
    <property type="entry name" value="Nucleotid_trans"/>
    <property type="match status" value="1"/>
</dbReference>
<dbReference type="SUPFAM" id="SSF53448">
    <property type="entry name" value="Nucleotide-diphospho-sugar transferases"/>
    <property type="match status" value="1"/>
</dbReference>
<accession>Q9C9Q6</accession>
<accession>Q84R12</accession>
<gene>
    <name evidence="6" type="primary">RRA1</name>
    <name evidence="9" type="ordered locus">At1g75120</name>
    <name evidence="10" type="ORF">F9E10.3</name>
</gene>
<sequence length="402" mass="45475">MAVRKEKVQPFRECGIAIAVLVGIFIGCVCTILIPNDFVNFRSSKVASASCESPERVKMFKAEFAIISEKNGELRKQVSDLTEKVRLAEQKEVIKAGPFGTVTGLQTNPTVAPDESANPRLAKLLEKVAVNKEIIVVLANNNVKPMLEVQIASVKRVGIQNYLVVPLDDSLESFCKSNEVAYYKRDPDNAIDVVGKSRRSSDVSGLKFRVLREFLQLGYGVLLSDVDIVFLQNPFGHLYRDSDVESMSDGHDNNTAYGFNDVFDDPTMTRSRTVYTNRIWVFNSGFFYLRPTLPSIELLDRVTDTLSKSGGWDQAVFNQHLFYPSHPGYTGLYASKRVMDVYEFMNSRVLFKTVRKDEEMKKLKPVIIHMNYHSDKLERMQAAVEFYVNGKQDALDRFRDGS</sequence>
<feature type="chain" id="PRO_0000434537" description="Arabinosyltransferase RRA1">
    <location>
        <begin position="1"/>
        <end position="402"/>
    </location>
</feature>
<feature type="topological domain" description="Cytoplasmic" evidence="7">
    <location>
        <begin position="1"/>
        <end position="13"/>
    </location>
</feature>
<feature type="transmembrane region" description="Helical; Signal-anchor for type II membrane protein" evidence="2">
    <location>
        <begin position="14"/>
        <end position="34"/>
    </location>
</feature>
<feature type="topological domain" description="Lumenal" evidence="7">
    <location>
        <begin position="35"/>
        <end position="402"/>
    </location>
</feature>
<feature type="short sequence motif" description="DXD motif" evidence="7">
    <location>
        <begin position="225"/>
        <end position="227"/>
    </location>
</feature>
<feature type="glycosylation site" description="N-linked (GlcNAc...) asparagine" evidence="3">
    <location>
        <position position="253"/>
    </location>
</feature>
<feature type="sequence conflict" description="In Ref. 4; AAP04162 and 5; BAF00513." evidence="7" ref="4 5">
    <original>D</original>
    <variation>Y</variation>
    <location>
        <position position="168"/>
    </location>
</feature>
<evidence type="ECO:0000250" key="1">
    <source>
        <dbReference type="UniProtKB" id="Q9JI93"/>
    </source>
</evidence>
<evidence type="ECO:0000255" key="2"/>
<evidence type="ECO:0000255" key="3">
    <source>
        <dbReference type="PROSITE-ProRule" id="PRU00498"/>
    </source>
</evidence>
<evidence type="ECO:0000269" key="4">
    <source>
    </source>
</evidence>
<evidence type="ECO:0000269" key="5">
    <source>
    </source>
</evidence>
<evidence type="ECO:0000303" key="6">
    <source>
    </source>
</evidence>
<evidence type="ECO:0000305" key="7"/>
<evidence type="ECO:0000305" key="8">
    <source>
    </source>
</evidence>
<evidence type="ECO:0000312" key="9">
    <source>
        <dbReference type="Araport" id="AT1G75120"/>
    </source>
</evidence>
<evidence type="ECO:0000312" key="10">
    <source>
        <dbReference type="EMBL" id="AAG51930.1"/>
    </source>
</evidence>
<reference key="1">
    <citation type="journal article" date="2014" name="Plant J.">
        <title>The plant glycosyltransferase clone collection for functional genomics.</title>
        <authorList>
            <person name="Lao J."/>
            <person name="Oikawa A."/>
            <person name="Bromley J.R."/>
            <person name="McInerney P."/>
            <person name="Suttangkakul A."/>
            <person name="Smith-Moritz A.M."/>
            <person name="Plahar H."/>
            <person name="Chiu T.-Y."/>
            <person name="Gonzalez Fernandez-Nino S.M.G."/>
            <person name="Ebert B."/>
            <person name="Yang F."/>
            <person name="Christiansen K.M."/>
            <person name="Hansen S.F."/>
            <person name="Stonebloom S."/>
            <person name="Adams P.D."/>
            <person name="Ronald P.C."/>
            <person name="Hillson N.J."/>
            <person name="Hadi M.Z."/>
            <person name="Vega-Sanchez M.E."/>
            <person name="Loque D."/>
            <person name="Scheller H.V."/>
            <person name="Heazlewood J.L."/>
        </authorList>
    </citation>
    <scope>NUCLEOTIDE SEQUENCE [MRNA]</scope>
    <source>
        <strain>cv. Columbia</strain>
    </source>
</reference>
<reference key="2">
    <citation type="journal article" date="2000" name="Nature">
        <title>Sequence and analysis of chromosome 1 of the plant Arabidopsis thaliana.</title>
        <authorList>
            <person name="Theologis A."/>
            <person name="Ecker J.R."/>
            <person name="Palm C.J."/>
            <person name="Federspiel N.A."/>
            <person name="Kaul S."/>
            <person name="White O."/>
            <person name="Alonso J."/>
            <person name="Altafi H."/>
            <person name="Araujo R."/>
            <person name="Bowman C.L."/>
            <person name="Brooks S.Y."/>
            <person name="Buehler E."/>
            <person name="Chan A."/>
            <person name="Chao Q."/>
            <person name="Chen H."/>
            <person name="Cheuk R.F."/>
            <person name="Chin C.W."/>
            <person name="Chung M.K."/>
            <person name="Conn L."/>
            <person name="Conway A.B."/>
            <person name="Conway A.R."/>
            <person name="Creasy T.H."/>
            <person name="Dewar K."/>
            <person name="Dunn P."/>
            <person name="Etgu P."/>
            <person name="Feldblyum T.V."/>
            <person name="Feng J.-D."/>
            <person name="Fong B."/>
            <person name="Fujii C.Y."/>
            <person name="Gill J.E."/>
            <person name="Goldsmith A.D."/>
            <person name="Haas B."/>
            <person name="Hansen N.F."/>
            <person name="Hughes B."/>
            <person name="Huizar L."/>
            <person name="Hunter J.L."/>
            <person name="Jenkins J."/>
            <person name="Johnson-Hopson C."/>
            <person name="Khan S."/>
            <person name="Khaykin E."/>
            <person name="Kim C.J."/>
            <person name="Koo H.L."/>
            <person name="Kremenetskaia I."/>
            <person name="Kurtz D.B."/>
            <person name="Kwan A."/>
            <person name="Lam B."/>
            <person name="Langin-Hooper S."/>
            <person name="Lee A."/>
            <person name="Lee J.M."/>
            <person name="Lenz C.A."/>
            <person name="Li J.H."/>
            <person name="Li Y.-P."/>
            <person name="Lin X."/>
            <person name="Liu S.X."/>
            <person name="Liu Z.A."/>
            <person name="Luros J.S."/>
            <person name="Maiti R."/>
            <person name="Marziali A."/>
            <person name="Militscher J."/>
            <person name="Miranda M."/>
            <person name="Nguyen M."/>
            <person name="Nierman W.C."/>
            <person name="Osborne B.I."/>
            <person name="Pai G."/>
            <person name="Peterson J."/>
            <person name="Pham P.K."/>
            <person name="Rizzo M."/>
            <person name="Rooney T."/>
            <person name="Rowley D."/>
            <person name="Sakano H."/>
            <person name="Salzberg S.L."/>
            <person name="Schwartz J.R."/>
            <person name="Shinn P."/>
            <person name="Southwick A.M."/>
            <person name="Sun H."/>
            <person name="Tallon L.J."/>
            <person name="Tambunga G."/>
            <person name="Toriumi M.J."/>
            <person name="Town C.D."/>
            <person name="Utterback T."/>
            <person name="Van Aken S."/>
            <person name="Vaysberg M."/>
            <person name="Vysotskaia V.S."/>
            <person name="Walker M."/>
            <person name="Wu D."/>
            <person name="Yu G."/>
            <person name="Fraser C.M."/>
            <person name="Venter J.C."/>
            <person name="Davis R.W."/>
        </authorList>
    </citation>
    <scope>NUCLEOTIDE SEQUENCE [LARGE SCALE GENOMIC DNA]</scope>
    <source>
        <strain>cv. Columbia</strain>
    </source>
</reference>
<reference key="3">
    <citation type="journal article" date="2017" name="Plant J.">
        <title>Araport11: a complete reannotation of the Arabidopsis thaliana reference genome.</title>
        <authorList>
            <person name="Cheng C.Y."/>
            <person name="Krishnakumar V."/>
            <person name="Chan A.P."/>
            <person name="Thibaud-Nissen F."/>
            <person name="Schobel S."/>
            <person name="Town C.D."/>
        </authorList>
    </citation>
    <scope>GENOME REANNOTATION</scope>
    <source>
        <strain>cv. Columbia</strain>
    </source>
</reference>
<reference key="4">
    <citation type="journal article" date="2003" name="Science">
        <title>Empirical analysis of transcriptional activity in the Arabidopsis genome.</title>
        <authorList>
            <person name="Yamada K."/>
            <person name="Lim J."/>
            <person name="Dale J.M."/>
            <person name="Chen H."/>
            <person name="Shinn P."/>
            <person name="Palm C.J."/>
            <person name="Southwick A.M."/>
            <person name="Wu H.C."/>
            <person name="Kim C.J."/>
            <person name="Nguyen M."/>
            <person name="Pham P.K."/>
            <person name="Cheuk R.F."/>
            <person name="Karlin-Newmann G."/>
            <person name="Liu S.X."/>
            <person name="Lam B."/>
            <person name="Sakano H."/>
            <person name="Wu T."/>
            <person name="Yu G."/>
            <person name="Miranda M."/>
            <person name="Quach H.L."/>
            <person name="Tripp M."/>
            <person name="Chang C.H."/>
            <person name="Lee J.M."/>
            <person name="Toriumi M.J."/>
            <person name="Chan M.M."/>
            <person name="Tang C.C."/>
            <person name="Onodera C.S."/>
            <person name="Deng J.M."/>
            <person name="Akiyama K."/>
            <person name="Ansari Y."/>
            <person name="Arakawa T."/>
            <person name="Banh J."/>
            <person name="Banno F."/>
            <person name="Bowser L."/>
            <person name="Brooks S.Y."/>
            <person name="Carninci P."/>
            <person name="Chao Q."/>
            <person name="Choy N."/>
            <person name="Enju A."/>
            <person name="Goldsmith A.D."/>
            <person name="Gurjal M."/>
            <person name="Hansen N.F."/>
            <person name="Hayashizaki Y."/>
            <person name="Johnson-Hopson C."/>
            <person name="Hsuan V.W."/>
            <person name="Iida K."/>
            <person name="Karnes M."/>
            <person name="Khan S."/>
            <person name="Koesema E."/>
            <person name="Ishida J."/>
            <person name="Jiang P.X."/>
            <person name="Jones T."/>
            <person name="Kawai J."/>
            <person name="Kamiya A."/>
            <person name="Meyers C."/>
            <person name="Nakajima M."/>
            <person name="Narusaka M."/>
            <person name="Seki M."/>
            <person name="Sakurai T."/>
            <person name="Satou M."/>
            <person name="Tamse R."/>
            <person name="Vaysberg M."/>
            <person name="Wallender E.K."/>
            <person name="Wong C."/>
            <person name="Yamamura Y."/>
            <person name="Yuan S."/>
            <person name="Shinozaki K."/>
            <person name="Davis R.W."/>
            <person name="Theologis A."/>
            <person name="Ecker J.R."/>
        </authorList>
    </citation>
    <scope>NUCLEOTIDE SEQUENCE [LARGE SCALE MRNA]</scope>
    <source>
        <strain>cv. Columbia</strain>
    </source>
</reference>
<reference key="5">
    <citation type="submission" date="2006-07" db="EMBL/GenBank/DDBJ databases">
        <title>Large-scale analysis of RIKEN Arabidopsis full-length (RAFL) cDNAs.</title>
        <authorList>
            <person name="Totoki Y."/>
            <person name="Seki M."/>
            <person name="Ishida J."/>
            <person name="Nakajima M."/>
            <person name="Enju A."/>
            <person name="Kamiya A."/>
            <person name="Narusaka M."/>
            <person name="Shin-i T."/>
            <person name="Nakagawa M."/>
            <person name="Sakamoto N."/>
            <person name="Oishi K."/>
            <person name="Kohara Y."/>
            <person name="Kobayashi M."/>
            <person name="Toyoda A."/>
            <person name="Sakaki Y."/>
            <person name="Sakurai T."/>
            <person name="Iida K."/>
            <person name="Akiyama K."/>
            <person name="Satou M."/>
            <person name="Toyoda T."/>
            <person name="Konagaya A."/>
            <person name="Carninci P."/>
            <person name="Kawai J."/>
            <person name="Hayashizaki Y."/>
            <person name="Shinozaki K."/>
        </authorList>
    </citation>
    <scope>NUCLEOTIDE SEQUENCE [LARGE SCALE MRNA]</scope>
    <source>
        <strain>cv. Columbia</strain>
    </source>
</reference>
<reference key="6">
    <citation type="submission" date="2006-08" db="EMBL/GenBank/DDBJ databases">
        <title>Arabidopsis ORF Clones.</title>
        <authorList>
            <person name="Quinitio C."/>
            <person name="Chen H."/>
            <person name="Kim C.J."/>
            <person name="Shinn P."/>
            <person name="Ecker J.R."/>
        </authorList>
    </citation>
    <scope>NUCLEOTIDE SEQUENCE [LARGE SCALE GENOMIC DNA]</scope>
    <source>
        <strain>cv. Columbia</strain>
    </source>
</reference>
<reference key="7">
    <citation type="journal article" date="2007" name="Plant Mol. Biol.">
        <title>Molecular characterization of two Arabidopsis thaliana glycosyltransferase mutants, rra1 and rra2, which have a reduced residual arabinose content in a polymer tightly associated with the cellulosic wall residue.</title>
        <authorList>
            <person name="Egelund J."/>
            <person name="Obel N."/>
            <person name="Ulvskov P."/>
            <person name="Geshi N."/>
            <person name="Pauly M."/>
            <person name="Bacic A."/>
            <person name="Petersen B.L."/>
        </authorList>
    </citation>
    <scope>FUNCTION</scope>
    <scope>TISSUE SPECIFICITY</scope>
    <scope>DISRUPTION PHENOTYPE</scope>
    <source>
        <strain>cv. Columbia</strain>
    </source>
</reference>
<reference key="8">
    <citation type="journal article" date="2011" name="Science">
        <title>O-glycosylated cell wall proteins are essential in root hair growth.</title>
        <authorList>
            <person name="Velasquez S.M."/>
            <person name="Ricardi M.M."/>
            <person name="Dorosz J.G."/>
            <person name="Fernandez P.V."/>
            <person name="Nadra A.D."/>
            <person name="Pol-Fachin L."/>
            <person name="Egelund J."/>
            <person name="Gille S."/>
            <person name="Harholt J."/>
            <person name="Ciancia M."/>
            <person name="Verli H."/>
            <person name="Pauly M."/>
            <person name="Bacic A."/>
            <person name="Olsen C.E."/>
            <person name="Ulvskov P."/>
            <person name="Petersen B.L."/>
            <person name="Somerville C."/>
            <person name="Iusem N.D."/>
            <person name="Estevez J.M."/>
        </authorList>
    </citation>
    <scope>FUNCTION</scope>
    <scope>SUBCELLULAR LOCATION</scope>
    <scope>DISRUPTION PHENOTYPE</scope>
    <source>
        <strain>cv. Columbia</strain>
    </source>
</reference>
<keyword id="KW-0961">Cell wall biogenesis/degradation</keyword>
<keyword id="KW-0325">Glycoprotein</keyword>
<keyword id="KW-0328">Glycosyltransferase</keyword>
<keyword id="KW-0333">Golgi apparatus</keyword>
<keyword id="KW-0472">Membrane</keyword>
<keyword id="KW-1185">Reference proteome</keyword>
<keyword id="KW-0735">Signal-anchor</keyword>
<keyword id="KW-0808">Transferase</keyword>
<keyword id="KW-0812">Transmembrane</keyword>
<keyword id="KW-1133">Transmembrane helix</keyword>
<comment type="function">
    <text evidence="4 5">Plays a role in the arabinosylation of cell wall components (PubMed:17401635). Involved in the arabinosylation of extensin proteins in root hair cells. Extensins are structural glycoproteins present in cell walls and its arabinosylation is important for root hair cell development (PubMed:21680836).</text>
</comment>
<comment type="subcellular location">
    <subcellularLocation>
        <location evidence="5">Golgi apparatus membrane</location>
        <topology evidence="8">Single-pass type II membrane protein</topology>
    </subcellularLocation>
</comment>
<comment type="tissue specificity">
    <text evidence="4">Expressed in leaf meristem and at points of cauline leaf attachments on the primary stem. Expressed at low levels in siliques.</text>
</comment>
<comment type="domain">
    <text evidence="1">The conserved DXD motif is involved in enzyme activity.</text>
</comment>
<comment type="disruption phenotype">
    <text evidence="4 5">Reduced arabinose content in the insoluble cell wall fraction of meristematic region (PubMed:17401635). Reduced root hair length and content of arabinosylated extensins in root cell walls (PubMed:21680836).</text>
</comment>
<comment type="similarity">
    <text evidence="7">Belongs to the glycosyltransferase 77 family.</text>
</comment>
<name>RRA1_ARATH</name>